<reference key="1">
    <citation type="submission" date="2009-07" db="EMBL/GenBank/DDBJ databases">
        <title>Complete sequence of Geobacter sp. M21.</title>
        <authorList>
            <consortium name="US DOE Joint Genome Institute"/>
            <person name="Lucas S."/>
            <person name="Copeland A."/>
            <person name="Lapidus A."/>
            <person name="Glavina del Rio T."/>
            <person name="Dalin E."/>
            <person name="Tice H."/>
            <person name="Bruce D."/>
            <person name="Goodwin L."/>
            <person name="Pitluck S."/>
            <person name="Saunders E."/>
            <person name="Brettin T."/>
            <person name="Detter J.C."/>
            <person name="Han C."/>
            <person name="Larimer F."/>
            <person name="Land M."/>
            <person name="Hauser L."/>
            <person name="Kyrpides N."/>
            <person name="Ovchinnikova G."/>
            <person name="Lovley D."/>
        </authorList>
    </citation>
    <scope>NUCLEOTIDE SEQUENCE [LARGE SCALE GENOMIC DNA]</scope>
    <source>
        <strain>M21</strain>
    </source>
</reference>
<gene>
    <name evidence="1" type="primary">trpD</name>
    <name type="ordered locus">GM21_2260</name>
</gene>
<proteinExistence type="inferred from homology"/>
<sequence length="352" mass="37027">MIRKAIARVVERQDLSEAEMIEVMDQVMSGGATPAQIASFITALRMKGETVDEITGAARVMRDRALPIRVGKSVLGIDRDDINLDRETILDTCGTGGSGTNSFNISTTVAFIVSACGVKVAKHGNRAVSSSCGSADVLEALGVNLDVTPEVVERSIAQIGIGFLFAPALHGAMKHAIGPRREIGIRTIFNILGPLTNPAGADCQVLGVYREDLVEKLAQVLKKLGCRSGFVVHGSDGMDEITLTGESTVAEITADGVKLSKVTPEQFGLERAPLTELHGGDAQGNAVIVRDILSGKDGAKRRIVLLNAGYALVATGKAKDVAEGIRLAAETIDSGAAMKQLERLVALTNEAE</sequence>
<feature type="chain" id="PRO_1000204184" description="Anthranilate phosphoribosyltransferase">
    <location>
        <begin position="1"/>
        <end position="352"/>
    </location>
</feature>
<feature type="binding site" evidence="1">
    <location>
        <position position="94"/>
    </location>
    <ligand>
        <name>5-phospho-alpha-D-ribose 1-diphosphate</name>
        <dbReference type="ChEBI" id="CHEBI:58017"/>
    </ligand>
</feature>
<feature type="binding site" evidence="1">
    <location>
        <position position="94"/>
    </location>
    <ligand>
        <name>anthranilate</name>
        <dbReference type="ChEBI" id="CHEBI:16567"/>
        <label>1</label>
    </ligand>
</feature>
<feature type="binding site" evidence="1">
    <location>
        <begin position="97"/>
        <end position="98"/>
    </location>
    <ligand>
        <name>5-phospho-alpha-D-ribose 1-diphosphate</name>
        <dbReference type="ChEBI" id="CHEBI:58017"/>
    </ligand>
</feature>
<feature type="binding site" evidence="1">
    <location>
        <position position="102"/>
    </location>
    <ligand>
        <name>5-phospho-alpha-D-ribose 1-diphosphate</name>
        <dbReference type="ChEBI" id="CHEBI:58017"/>
    </ligand>
</feature>
<feature type="binding site" evidence="1">
    <location>
        <begin position="104"/>
        <end position="107"/>
    </location>
    <ligand>
        <name>5-phospho-alpha-D-ribose 1-diphosphate</name>
        <dbReference type="ChEBI" id="CHEBI:58017"/>
    </ligand>
</feature>
<feature type="binding site" evidence="1">
    <location>
        <position position="106"/>
    </location>
    <ligand>
        <name>Mg(2+)</name>
        <dbReference type="ChEBI" id="CHEBI:18420"/>
        <label>1</label>
    </ligand>
</feature>
<feature type="binding site" evidence="1">
    <location>
        <begin position="122"/>
        <end position="130"/>
    </location>
    <ligand>
        <name>5-phospho-alpha-D-ribose 1-diphosphate</name>
        <dbReference type="ChEBI" id="CHEBI:58017"/>
    </ligand>
</feature>
<feature type="binding site" evidence="1">
    <location>
        <position position="125"/>
    </location>
    <ligand>
        <name>anthranilate</name>
        <dbReference type="ChEBI" id="CHEBI:16567"/>
        <label>1</label>
    </ligand>
</feature>
<feature type="binding site" evidence="1">
    <location>
        <position position="134"/>
    </location>
    <ligand>
        <name>5-phospho-alpha-D-ribose 1-diphosphate</name>
        <dbReference type="ChEBI" id="CHEBI:58017"/>
    </ligand>
</feature>
<feature type="binding site" evidence="1">
    <location>
        <position position="180"/>
    </location>
    <ligand>
        <name>anthranilate</name>
        <dbReference type="ChEBI" id="CHEBI:16567"/>
        <label>2</label>
    </ligand>
</feature>
<feature type="binding site" evidence="1">
    <location>
        <position position="239"/>
    </location>
    <ligand>
        <name>Mg(2+)</name>
        <dbReference type="ChEBI" id="CHEBI:18420"/>
        <label>2</label>
    </ligand>
</feature>
<feature type="binding site" evidence="1">
    <location>
        <position position="240"/>
    </location>
    <ligand>
        <name>Mg(2+)</name>
        <dbReference type="ChEBI" id="CHEBI:18420"/>
        <label>1</label>
    </ligand>
</feature>
<feature type="binding site" evidence="1">
    <location>
        <position position="240"/>
    </location>
    <ligand>
        <name>Mg(2+)</name>
        <dbReference type="ChEBI" id="CHEBI:18420"/>
        <label>2</label>
    </ligand>
</feature>
<evidence type="ECO:0000255" key="1">
    <source>
        <dbReference type="HAMAP-Rule" id="MF_00211"/>
    </source>
</evidence>
<protein>
    <recommendedName>
        <fullName evidence="1">Anthranilate phosphoribosyltransferase</fullName>
        <ecNumber evidence="1">2.4.2.18</ecNumber>
    </recommendedName>
</protein>
<keyword id="KW-0028">Amino-acid biosynthesis</keyword>
<keyword id="KW-0057">Aromatic amino acid biosynthesis</keyword>
<keyword id="KW-0328">Glycosyltransferase</keyword>
<keyword id="KW-0460">Magnesium</keyword>
<keyword id="KW-0479">Metal-binding</keyword>
<keyword id="KW-0808">Transferase</keyword>
<keyword id="KW-0822">Tryptophan biosynthesis</keyword>
<comment type="function">
    <text evidence="1">Catalyzes the transfer of the phosphoribosyl group of 5-phosphorylribose-1-pyrophosphate (PRPP) to anthranilate to yield N-(5'-phosphoribosyl)-anthranilate (PRA).</text>
</comment>
<comment type="catalytic activity">
    <reaction evidence="1">
        <text>N-(5-phospho-beta-D-ribosyl)anthranilate + diphosphate = 5-phospho-alpha-D-ribose 1-diphosphate + anthranilate</text>
        <dbReference type="Rhea" id="RHEA:11768"/>
        <dbReference type="ChEBI" id="CHEBI:16567"/>
        <dbReference type="ChEBI" id="CHEBI:18277"/>
        <dbReference type="ChEBI" id="CHEBI:33019"/>
        <dbReference type="ChEBI" id="CHEBI:58017"/>
        <dbReference type="EC" id="2.4.2.18"/>
    </reaction>
</comment>
<comment type="cofactor">
    <cofactor evidence="1">
        <name>Mg(2+)</name>
        <dbReference type="ChEBI" id="CHEBI:18420"/>
    </cofactor>
    <text evidence="1">Binds 2 magnesium ions per monomer.</text>
</comment>
<comment type="pathway">
    <text evidence="1">Amino-acid biosynthesis; L-tryptophan biosynthesis; L-tryptophan from chorismate: step 2/5.</text>
</comment>
<comment type="subunit">
    <text evidence="1">Homodimer.</text>
</comment>
<comment type="similarity">
    <text evidence="1">Belongs to the anthranilate phosphoribosyltransferase family.</text>
</comment>
<organism>
    <name type="scientific">Geobacter sp. (strain M21)</name>
    <dbReference type="NCBI Taxonomy" id="443144"/>
    <lineage>
        <taxon>Bacteria</taxon>
        <taxon>Pseudomonadati</taxon>
        <taxon>Thermodesulfobacteriota</taxon>
        <taxon>Desulfuromonadia</taxon>
        <taxon>Geobacterales</taxon>
        <taxon>Geobacteraceae</taxon>
        <taxon>Geobacter</taxon>
    </lineage>
</organism>
<accession>C6DYM5</accession>
<dbReference type="EC" id="2.4.2.18" evidence="1"/>
<dbReference type="EMBL" id="CP001661">
    <property type="protein sequence ID" value="ACT18309.1"/>
    <property type="molecule type" value="Genomic_DNA"/>
</dbReference>
<dbReference type="SMR" id="C6DYM5"/>
<dbReference type="STRING" id="443144.GM21_2260"/>
<dbReference type="KEGG" id="gem:GM21_2260"/>
<dbReference type="eggNOG" id="COG0547">
    <property type="taxonomic scope" value="Bacteria"/>
</dbReference>
<dbReference type="HOGENOM" id="CLU_034315_2_1_7"/>
<dbReference type="OrthoDB" id="9806430at2"/>
<dbReference type="UniPathway" id="UPA00035">
    <property type="reaction ID" value="UER00041"/>
</dbReference>
<dbReference type="GO" id="GO:0005829">
    <property type="term" value="C:cytosol"/>
    <property type="evidence" value="ECO:0007669"/>
    <property type="project" value="TreeGrafter"/>
</dbReference>
<dbReference type="GO" id="GO:0004048">
    <property type="term" value="F:anthranilate phosphoribosyltransferase activity"/>
    <property type="evidence" value="ECO:0007669"/>
    <property type="project" value="UniProtKB-UniRule"/>
</dbReference>
<dbReference type="GO" id="GO:0000287">
    <property type="term" value="F:magnesium ion binding"/>
    <property type="evidence" value="ECO:0007669"/>
    <property type="project" value="UniProtKB-UniRule"/>
</dbReference>
<dbReference type="GO" id="GO:0000162">
    <property type="term" value="P:L-tryptophan biosynthetic process"/>
    <property type="evidence" value="ECO:0007669"/>
    <property type="project" value="UniProtKB-UniRule"/>
</dbReference>
<dbReference type="FunFam" id="1.20.970.10:FF:000006">
    <property type="entry name" value="Anthranilate phosphoribosyltransferase"/>
    <property type="match status" value="1"/>
</dbReference>
<dbReference type="FunFam" id="3.40.1030.10:FF:000002">
    <property type="entry name" value="Anthranilate phosphoribosyltransferase"/>
    <property type="match status" value="1"/>
</dbReference>
<dbReference type="Gene3D" id="3.40.1030.10">
    <property type="entry name" value="Nucleoside phosphorylase/phosphoribosyltransferase catalytic domain"/>
    <property type="match status" value="1"/>
</dbReference>
<dbReference type="Gene3D" id="1.20.970.10">
    <property type="entry name" value="Transferase, Pyrimidine Nucleoside Phosphorylase, Chain C"/>
    <property type="match status" value="1"/>
</dbReference>
<dbReference type="HAMAP" id="MF_00211">
    <property type="entry name" value="TrpD"/>
    <property type="match status" value="1"/>
</dbReference>
<dbReference type="InterPro" id="IPR005940">
    <property type="entry name" value="Anthranilate_Pribosyl_Tfrase"/>
</dbReference>
<dbReference type="InterPro" id="IPR000312">
    <property type="entry name" value="Glycosyl_Trfase_fam3"/>
</dbReference>
<dbReference type="InterPro" id="IPR017459">
    <property type="entry name" value="Glycosyl_Trfase_fam3_N_dom"/>
</dbReference>
<dbReference type="InterPro" id="IPR036320">
    <property type="entry name" value="Glycosyl_Trfase_fam3_N_dom_sf"/>
</dbReference>
<dbReference type="InterPro" id="IPR035902">
    <property type="entry name" value="Nuc_phospho_transferase"/>
</dbReference>
<dbReference type="NCBIfam" id="TIGR01245">
    <property type="entry name" value="trpD"/>
    <property type="match status" value="1"/>
</dbReference>
<dbReference type="PANTHER" id="PTHR43285">
    <property type="entry name" value="ANTHRANILATE PHOSPHORIBOSYLTRANSFERASE"/>
    <property type="match status" value="1"/>
</dbReference>
<dbReference type="PANTHER" id="PTHR43285:SF2">
    <property type="entry name" value="ANTHRANILATE PHOSPHORIBOSYLTRANSFERASE"/>
    <property type="match status" value="1"/>
</dbReference>
<dbReference type="Pfam" id="PF02885">
    <property type="entry name" value="Glycos_trans_3N"/>
    <property type="match status" value="1"/>
</dbReference>
<dbReference type="Pfam" id="PF00591">
    <property type="entry name" value="Glycos_transf_3"/>
    <property type="match status" value="1"/>
</dbReference>
<dbReference type="SUPFAM" id="SSF52418">
    <property type="entry name" value="Nucleoside phosphorylase/phosphoribosyltransferase catalytic domain"/>
    <property type="match status" value="1"/>
</dbReference>
<dbReference type="SUPFAM" id="SSF47648">
    <property type="entry name" value="Nucleoside phosphorylase/phosphoribosyltransferase N-terminal domain"/>
    <property type="match status" value="1"/>
</dbReference>
<name>TRPD_GEOSM</name>